<protein>
    <recommendedName>
        <fullName>Protein SamA</fullName>
        <ecNumber>3.4.21.-</ecNumber>
    </recommendedName>
    <component>
        <recommendedName>
            <fullName>Protein SamA'</fullName>
        </recommendedName>
    </component>
</protein>
<dbReference type="EC" id="3.4.21.-"/>
<dbReference type="EMBL" id="D90202">
    <property type="protein sequence ID" value="BAA14225.1"/>
    <property type="molecule type" value="Genomic_DNA"/>
</dbReference>
<dbReference type="EMBL" id="AE006471">
    <property type="protein sequence ID" value="AAL23541.1"/>
    <property type="molecule type" value="Genomic_DNA"/>
</dbReference>
<dbReference type="PIR" id="A38176">
    <property type="entry name" value="A38176"/>
</dbReference>
<dbReference type="RefSeq" id="NP_490545.1">
    <property type="nucleotide sequence ID" value="NC_003277.2"/>
</dbReference>
<dbReference type="RefSeq" id="YP_003264428.1">
    <property type="nucleotide sequence ID" value="NC_013437.1"/>
</dbReference>
<dbReference type="RefSeq" id="YP_003864205.1">
    <property type="nucleotide sequence ID" value="NC_014476.2"/>
</dbReference>
<dbReference type="RefSeq" id="YP_006955248.1">
    <property type="nucleotide sequence ID" value="NC_019108.1"/>
</dbReference>
<dbReference type="RefSeq" id="YP_006955388.1">
    <property type="nucleotide sequence ID" value="NC_019109.1"/>
</dbReference>
<dbReference type="RefSeq" id="YP_006955594.1">
    <property type="nucleotide sequence ID" value="NC_019001.1"/>
</dbReference>
<dbReference type="SMR" id="P23831"/>
<dbReference type="MEROPS" id="S24.003"/>
<dbReference type="GeneID" id="1256182"/>
<dbReference type="KEGG" id="stm:PSLT055"/>
<dbReference type="PATRIC" id="fig|99287.12.peg.4913"/>
<dbReference type="HOGENOM" id="CLU_066192_0_0_6"/>
<dbReference type="OMA" id="VQIWGVA"/>
<dbReference type="PhylomeDB" id="P23831"/>
<dbReference type="BioCyc" id="SENT99287:PSLT055-MONOMER"/>
<dbReference type="Proteomes" id="UP000001014">
    <property type="component" value="Plasmid pSLT"/>
</dbReference>
<dbReference type="GO" id="GO:0032993">
    <property type="term" value="C:protein-DNA complex"/>
    <property type="evidence" value="ECO:0000318"/>
    <property type="project" value="GO_Central"/>
</dbReference>
<dbReference type="GO" id="GO:0001217">
    <property type="term" value="F:DNA-binding transcription repressor activity"/>
    <property type="evidence" value="ECO:0000318"/>
    <property type="project" value="GO_Central"/>
</dbReference>
<dbReference type="GO" id="GO:0043565">
    <property type="term" value="F:sequence-specific DNA binding"/>
    <property type="evidence" value="ECO:0000318"/>
    <property type="project" value="GO_Central"/>
</dbReference>
<dbReference type="GO" id="GO:0008236">
    <property type="term" value="F:serine-type peptidase activity"/>
    <property type="evidence" value="ECO:0007669"/>
    <property type="project" value="UniProtKB-KW"/>
</dbReference>
<dbReference type="GO" id="GO:0006281">
    <property type="term" value="P:DNA repair"/>
    <property type="evidence" value="ECO:0007669"/>
    <property type="project" value="UniProtKB-KW"/>
</dbReference>
<dbReference type="GO" id="GO:0045892">
    <property type="term" value="P:negative regulation of DNA-templated transcription"/>
    <property type="evidence" value="ECO:0000318"/>
    <property type="project" value="GO_Central"/>
</dbReference>
<dbReference type="GO" id="GO:0006508">
    <property type="term" value="P:proteolysis"/>
    <property type="evidence" value="ECO:0007669"/>
    <property type="project" value="UniProtKB-KW"/>
</dbReference>
<dbReference type="GO" id="GO:0009432">
    <property type="term" value="P:SOS response"/>
    <property type="evidence" value="ECO:0000318"/>
    <property type="project" value="GO_Central"/>
</dbReference>
<dbReference type="CDD" id="cd06529">
    <property type="entry name" value="S24_LexA-like"/>
    <property type="match status" value="1"/>
</dbReference>
<dbReference type="Gene3D" id="2.10.109.10">
    <property type="entry name" value="Umud Fragment, subunit A"/>
    <property type="match status" value="1"/>
</dbReference>
<dbReference type="InterPro" id="IPR039418">
    <property type="entry name" value="LexA-like"/>
</dbReference>
<dbReference type="InterPro" id="IPR036286">
    <property type="entry name" value="LexA/Signal_pep-like_sf"/>
</dbReference>
<dbReference type="InterPro" id="IPR050077">
    <property type="entry name" value="LexA_repressor"/>
</dbReference>
<dbReference type="InterPro" id="IPR006197">
    <property type="entry name" value="Peptidase_S24_LexA"/>
</dbReference>
<dbReference type="InterPro" id="IPR015927">
    <property type="entry name" value="Peptidase_S24_S26A/B/C"/>
</dbReference>
<dbReference type="NCBIfam" id="NF007621">
    <property type="entry name" value="PRK10276.1"/>
    <property type="match status" value="1"/>
</dbReference>
<dbReference type="PANTHER" id="PTHR33516">
    <property type="entry name" value="LEXA REPRESSOR"/>
    <property type="match status" value="1"/>
</dbReference>
<dbReference type="PANTHER" id="PTHR33516:SF2">
    <property type="entry name" value="LEXA REPRESSOR-RELATED"/>
    <property type="match status" value="1"/>
</dbReference>
<dbReference type="Pfam" id="PF00717">
    <property type="entry name" value="Peptidase_S24"/>
    <property type="match status" value="1"/>
</dbReference>
<dbReference type="PRINTS" id="PR00726">
    <property type="entry name" value="LEXASERPTASE"/>
</dbReference>
<dbReference type="SUPFAM" id="SSF51306">
    <property type="entry name" value="LexA/Signal peptidase"/>
    <property type="match status" value="1"/>
</dbReference>
<geneLocation type="plasmid">
    <name>pSLT</name>
</geneLocation>
<geneLocation type="plasmid">
    <name>60-MDa cryptic</name>
</geneLocation>
<keyword id="KW-0068">Autocatalytic cleavage</keyword>
<keyword id="KW-0227">DNA damage</keyword>
<keyword id="KW-0234">DNA repair</keyword>
<keyword id="KW-0378">Hydrolase</keyword>
<keyword id="KW-0614">Plasmid</keyword>
<keyword id="KW-0645">Protease</keyword>
<keyword id="KW-1185">Reference proteome</keyword>
<keyword id="KW-0720">Serine protease</keyword>
<keyword id="KW-0741">SOS mutagenesis</keyword>
<keyword id="KW-0742">SOS response</keyword>
<reference key="1">
    <citation type="journal article" date="1991" name="J. Bacteriol.">
        <title>Salmonella typhimurium has two homologous but different umuDC operons: cloning of a new umuDC-like operon (samAB) present in a 60-megadalton cryptic plasmid of S. typhimurium.</title>
        <authorList>
            <person name="Nohmi T."/>
            <person name="Hakura A."/>
            <person name="Nakai Y."/>
            <person name="Watanabe M."/>
            <person name="Murayama S.Y."/>
            <person name="Sofuni T."/>
        </authorList>
    </citation>
    <scope>NUCLEOTIDE SEQUENCE [GENOMIC DNA]</scope>
    <source>
        <strain>LT2</strain>
        <plasmid>60-MDa cryptic</plasmid>
    </source>
</reference>
<reference key="2">
    <citation type="journal article" date="2001" name="Nature">
        <title>Complete genome sequence of Salmonella enterica serovar Typhimurium LT2.</title>
        <authorList>
            <person name="McClelland M."/>
            <person name="Sanderson K.E."/>
            <person name="Spieth J."/>
            <person name="Clifton S.W."/>
            <person name="Latreille P."/>
            <person name="Courtney L."/>
            <person name="Porwollik S."/>
            <person name="Ali J."/>
            <person name="Dante M."/>
            <person name="Du F."/>
            <person name="Hou S."/>
            <person name="Layman D."/>
            <person name="Leonard S."/>
            <person name="Nguyen C."/>
            <person name="Scott K."/>
            <person name="Holmes A."/>
            <person name="Grewal N."/>
            <person name="Mulvaney E."/>
            <person name="Ryan E."/>
            <person name="Sun H."/>
            <person name="Florea L."/>
            <person name="Miller W."/>
            <person name="Stoneking T."/>
            <person name="Nhan M."/>
            <person name="Waterston R."/>
            <person name="Wilson R.K."/>
        </authorList>
    </citation>
    <scope>NUCLEOTIDE SEQUENCE [LARGE SCALE GENOMIC DNA]</scope>
    <source>
        <strain>LT2 / SGSC1412 / ATCC 700720</strain>
        <plasmid>pSLT</plasmid>
    </source>
</reference>
<proteinExistence type="inferred from homology"/>
<accession>P23831</accession>
<feature type="chain" id="PRO_0000041987" description="Protein SamA">
    <location>
        <begin position="1"/>
        <end position="140"/>
    </location>
</feature>
<feature type="chain" id="PRO_0000027303" description="Protein SamA'">
    <location>
        <begin position="26"/>
        <end position="140"/>
    </location>
</feature>
<feature type="active site" description="For autocatalytic cleavage activity" evidence="1">
    <location>
        <position position="61"/>
    </location>
</feature>
<feature type="active site" description="For autocatalytic cleavage activity" evidence="1">
    <location>
        <position position="98"/>
    </location>
</feature>
<feature type="site" description="Cleavage; by autolysis" evidence="1">
    <location>
        <begin position="25"/>
        <end position="26"/>
    </location>
</feature>
<organism>
    <name type="scientific">Salmonella typhimurium (strain LT2 / SGSC1412 / ATCC 700720)</name>
    <dbReference type="NCBI Taxonomy" id="99287"/>
    <lineage>
        <taxon>Bacteria</taxon>
        <taxon>Pseudomonadati</taxon>
        <taxon>Pseudomonadota</taxon>
        <taxon>Gammaproteobacteria</taxon>
        <taxon>Enterobacterales</taxon>
        <taxon>Enterobacteriaceae</taxon>
        <taxon>Salmonella</taxon>
    </lineage>
</organism>
<comment type="function">
    <text>Involved in UV protection and mutation.</text>
</comment>
<comment type="similarity">
    <text evidence="2">Belongs to the peptidase S24 family.</text>
</comment>
<evidence type="ECO:0000250" key="1"/>
<evidence type="ECO:0000305" key="2"/>
<gene>
    <name type="primary">samA</name>
    <name type="ordered locus">PSLT055</name>
</gene>
<sequence length="140" mass="15524">MLLLVAPEQEPVQSTAPLFTERCPAGFPSPAADYTEEELDLNAYCIRRPAATFFVRAIGDSMKEMGLHSGDLMVVDKAEKPMQGDIVIAETDGEFTVKRLQLKPRIALLPINPAYPTLYPEELQIFGVVTAFIHKTRSTD</sequence>
<name>SAMA_SALTY</name>